<protein>
    <recommendedName>
        <fullName evidence="2">Transaldolase</fullName>
        <ecNumber evidence="2">2.2.1.2</ecNumber>
    </recommendedName>
</protein>
<keyword id="KW-0963">Cytoplasm</keyword>
<keyword id="KW-0570">Pentose shunt</keyword>
<keyword id="KW-0704">Schiff base</keyword>
<keyword id="KW-0808">Transferase</keyword>
<sequence length="316" mass="34834">MSNKLEQLRKLTTVVADTGEIDAIKKYQPEDATTNPSLILKAAQIAEYAPLIDASIEYAKTQSDDKAQQIQDTCDMLAVNIGKEILKTIPGRISTEVDARLSYDMEGSVAKARQLVKMYNDAGITNDRILIKLASTWEGIRAAEILEKEGINCNLTLLFSFAQARACAEAGVFLISPFVGRIMDWYKAKEGRDFEAQEDPGVLSVTKIYNYYKEYGYKTVVMGASFRNIGEILELAGCDRLTIAPALLAELEAAEGEVVEKLVDSKGAAERPAPMTHAEFLWEHNQDPMAVEKLAEGIRNFAVDQGKLEAMIAAKL</sequence>
<name>TAL_VIBVY</name>
<accession>Q7MDD5</accession>
<comment type="function">
    <text evidence="2">Transaldolase is important for the balance of metabolites in the pentose-phosphate pathway.</text>
</comment>
<comment type="catalytic activity">
    <reaction evidence="2">
        <text>D-sedoheptulose 7-phosphate + D-glyceraldehyde 3-phosphate = D-erythrose 4-phosphate + beta-D-fructose 6-phosphate</text>
        <dbReference type="Rhea" id="RHEA:17053"/>
        <dbReference type="ChEBI" id="CHEBI:16897"/>
        <dbReference type="ChEBI" id="CHEBI:57483"/>
        <dbReference type="ChEBI" id="CHEBI:57634"/>
        <dbReference type="ChEBI" id="CHEBI:59776"/>
        <dbReference type="EC" id="2.2.1.2"/>
    </reaction>
</comment>
<comment type="pathway">
    <text evidence="2">Carbohydrate degradation; pentose phosphate pathway; D-glyceraldehyde 3-phosphate and beta-D-fructose 6-phosphate from D-ribose 5-phosphate and D-xylulose 5-phosphate (non-oxidative stage): step 2/3.</text>
</comment>
<comment type="subunit">
    <text evidence="1">Homodimer.</text>
</comment>
<comment type="subcellular location">
    <subcellularLocation>
        <location evidence="2">Cytoplasm</location>
    </subcellularLocation>
</comment>
<comment type="similarity">
    <text evidence="2">Belongs to the transaldolase family. Type 1 subfamily.</text>
</comment>
<dbReference type="EC" id="2.2.1.2" evidence="2"/>
<dbReference type="EMBL" id="BA000038">
    <property type="protein sequence ID" value="BAC97127.1"/>
    <property type="molecule type" value="Genomic_DNA"/>
</dbReference>
<dbReference type="RefSeq" id="WP_011152375.1">
    <property type="nucleotide sequence ID" value="NC_005140.1"/>
</dbReference>
<dbReference type="SMR" id="Q7MDD5"/>
<dbReference type="STRING" id="672.VV93_v1c40400"/>
<dbReference type="KEGG" id="vvy:VVA1101"/>
<dbReference type="eggNOG" id="COG0176">
    <property type="taxonomic scope" value="Bacteria"/>
</dbReference>
<dbReference type="HOGENOM" id="CLU_047470_0_1_6"/>
<dbReference type="UniPathway" id="UPA00115">
    <property type="reaction ID" value="UER00414"/>
</dbReference>
<dbReference type="Proteomes" id="UP000002675">
    <property type="component" value="Chromosome II"/>
</dbReference>
<dbReference type="GO" id="GO:0005829">
    <property type="term" value="C:cytosol"/>
    <property type="evidence" value="ECO:0007669"/>
    <property type="project" value="TreeGrafter"/>
</dbReference>
<dbReference type="GO" id="GO:0004801">
    <property type="term" value="F:transaldolase activity"/>
    <property type="evidence" value="ECO:0000250"/>
    <property type="project" value="UniProtKB"/>
</dbReference>
<dbReference type="GO" id="GO:0005975">
    <property type="term" value="P:carbohydrate metabolic process"/>
    <property type="evidence" value="ECO:0007669"/>
    <property type="project" value="InterPro"/>
</dbReference>
<dbReference type="GO" id="GO:0006098">
    <property type="term" value="P:pentose-phosphate shunt"/>
    <property type="evidence" value="ECO:0007669"/>
    <property type="project" value="UniProtKB-UniRule"/>
</dbReference>
<dbReference type="CDD" id="cd00957">
    <property type="entry name" value="Transaldolase_TalAB"/>
    <property type="match status" value="1"/>
</dbReference>
<dbReference type="FunFam" id="3.20.20.70:FF:000002">
    <property type="entry name" value="Transaldolase"/>
    <property type="match status" value="1"/>
</dbReference>
<dbReference type="Gene3D" id="3.20.20.70">
    <property type="entry name" value="Aldolase class I"/>
    <property type="match status" value="1"/>
</dbReference>
<dbReference type="HAMAP" id="MF_00492">
    <property type="entry name" value="Transaldolase_1"/>
    <property type="match status" value="1"/>
</dbReference>
<dbReference type="InterPro" id="IPR013785">
    <property type="entry name" value="Aldolase_TIM"/>
</dbReference>
<dbReference type="InterPro" id="IPR001585">
    <property type="entry name" value="TAL/FSA"/>
</dbReference>
<dbReference type="InterPro" id="IPR004730">
    <property type="entry name" value="Transaldolase_1"/>
</dbReference>
<dbReference type="InterPro" id="IPR018225">
    <property type="entry name" value="Transaldolase_AS"/>
</dbReference>
<dbReference type="NCBIfam" id="NF009001">
    <property type="entry name" value="PRK12346.1"/>
    <property type="match status" value="1"/>
</dbReference>
<dbReference type="NCBIfam" id="TIGR00874">
    <property type="entry name" value="talAB"/>
    <property type="match status" value="1"/>
</dbReference>
<dbReference type="PANTHER" id="PTHR10683">
    <property type="entry name" value="TRANSALDOLASE"/>
    <property type="match status" value="1"/>
</dbReference>
<dbReference type="PANTHER" id="PTHR10683:SF18">
    <property type="entry name" value="TRANSALDOLASE"/>
    <property type="match status" value="1"/>
</dbReference>
<dbReference type="Pfam" id="PF00923">
    <property type="entry name" value="TAL_FSA"/>
    <property type="match status" value="1"/>
</dbReference>
<dbReference type="SUPFAM" id="SSF51569">
    <property type="entry name" value="Aldolase"/>
    <property type="match status" value="1"/>
</dbReference>
<dbReference type="PROSITE" id="PS01054">
    <property type="entry name" value="TRANSALDOLASE_1"/>
    <property type="match status" value="1"/>
</dbReference>
<dbReference type="PROSITE" id="PS00958">
    <property type="entry name" value="TRANSALDOLASE_2"/>
    <property type="match status" value="1"/>
</dbReference>
<organism>
    <name type="scientific">Vibrio vulnificus (strain YJ016)</name>
    <dbReference type="NCBI Taxonomy" id="196600"/>
    <lineage>
        <taxon>Bacteria</taxon>
        <taxon>Pseudomonadati</taxon>
        <taxon>Pseudomonadota</taxon>
        <taxon>Gammaproteobacteria</taxon>
        <taxon>Vibrionales</taxon>
        <taxon>Vibrionaceae</taxon>
        <taxon>Vibrio</taxon>
    </lineage>
</organism>
<evidence type="ECO:0000250" key="1"/>
<evidence type="ECO:0000255" key="2">
    <source>
        <dbReference type="HAMAP-Rule" id="MF_00492"/>
    </source>
</evidence>
<feature type="chain" id="PRO_0000173623" description="Transaldolase">
    <location>
        <begin position="1"/>
        <end position="316"/>
    </location>
</feature>
<feature type="active site" description="Schiff-base intermediate with substrate" evidence="2">
    <location>
        <position position="132"/>
    </location>
</feature>
<gene>
    <name evidence="2" type="primary">tal</name>
    <name type="ordered locus">VVA1101</name>
</gene>
<proteinExistence type="inferred from homology"/>
<reference key="1">
    <citation type="journal article" date="2003" name="Genome Res.">
        <title>Comparative genome analysis of Vibrio vulnificus, a marine pathogen.</title>
        <authorList>
            <person name="Chen C.-Y."/>
            <person name="Wu K.-M."/>
            <person name="Chang Y.-C."/>
            <person name="Chang C.-H."/>
            <person name="Tsai H.-C."/>
            <person name="Liao T.-L."/>
            <person name="Liu Y.-M."/>
            <person name="Chen H.-J."/>
            <person name="Shen A.B.-T."/>
            <person name="Li J.-C."/>
            <person name="Su T.-L."/>
            <person name="Shao C.-P."/>
            <person name="Lee C.-T."/>
            <person name="Hor L.-I."/>
            <person name="Tsai S.-F."/>
        </authorList>
    </citation>
    <scope>NUCLEOTIDE SEQUENCE [LARGE SCALE GENOMIC DNA]</scope>
    <source>
        <strain>YJ016</strain>
    </source>
</reference>